<keyword id="KW-0238">DNA-binding</keyword>
<keyword id="KW-0804">Transcription</keyword>
<keyword id="KW-0805">Transcription regulation</keyword>
<feature type="chain" id="PRO_0000452503" description="Transcriptional repressor ThaA">
    <location>
        <begin position="1"/>
        <end position="238"/>
    </location>
</feature>
<feature type="domain" description="HTH luxR-type" evidence="1">
    <location>
        <begin position="169"/>
        <end position="234"/>
    </location>
</feature>
<feature type="DNA-binding region" description="H-T-H motif" evidence="1">
    <location>
        <begin position="193"/>
        <end position="212"/>
    </location>
</feature>
<reference key="1">
    <citation type="journal article" date="2005" name="BMC Genomics">
        <title>Bacterial genome adaptation to niches: divergence of the potential virulence genes in three Burkholderia species of different survival strategies.</title>
        <authorList>
            <person name="Kim H.S."/>
            <person name="Schell M.A."/>
            <person name="Yu Y."/>
            <person name="Ulrich R.L."/>
            <person name="Sarria S.H."/>
            <person name="Nierman W.C."/>
            <person name="DeShazer D."/>
        </authorList>
    </citation>
    <scope>NUCLEOTIDE SEQUENCE [LARGE SCALE GENOMIC DNA]</scope>
    <source>
        <strain>ATCC 700388 / DSM 13276 / CCUG 48851 / CIP 106301 / E264</strain>
    </source>
</reference>
<reference key="2">
    <citation type="journal article" date="2010" name="J. Am. Chem. Soc.">
        <title>Induced biosynthesis of cryptic polyketide metabolites in a Burkholderia thailandensis quorum sensing mutant.</title>
        <authorList>
            <person name="Ishida K."/>
            <person name="Lincke T."/>
            <person name="Behnken S."/>
            <person name="Hertweck C."/>
        </authorList>
    </citation>
    <scope>FUNCTION</scope>
    <scope>DISRUPTION PHENOTYPE</scope>
    <source>
        <strain>ATCC 700388 / DSM 13276 / CCUG 48851 / CIP 106301 / E264</strain>
    </source>
</reference>
<reference key="3">
    <citation type="journal article" date="2018" name="Antimicrob. Agents Chemother.">
        <title>Thailandamide, a Fatty Acid Synthesis Antibiotic That Is Coexpressed with a Resistant Target Gene.</title>
        <authorList>
            <person name="Wozniak C.E."/>
            <person name="Lin Z."/>
            <person name="Schmidt E.W."/>
            <person name="Hughes K.T."/>
            <person name="Liou T.G."/>
        </authorList>
    </citation>
    <scope>DISRUPTION PHENOTYPE</scope>
    <source>
        <strain>ATCC 700388 / DSM 13276 / CCUG 48851 / CIP 106301 / E264</strain>
    </source>
</reference>
<evidence type="ECO:0000255" key="1">
    <source>
        <dbReference type="PROSITE-ProRule" id="PRU00411"/>
    </source>
</evidence>
<evidence type="ECO:0000269" key="2">
    <source>
    </source>
</evidence>
<evidence type="ECO:0000269" key="3">
    <source>
    </source>
</evidence>
<evidence type="ECO:0000303" key="4">
    <source>
    </source>
</evidence>
<evidence type="ECO:0000305" key="5"/>
<evidence type="ECO:0000305" key="6">
    <source>
    </source>
</evidence>
<evidence type="ECO:0000305" key="7">
    <source>
    </source>
</evidence>
<organism>
    <name type="scientific">Burkholderia thailandensis (strain ATCC 700388 / DSM 13276 / CCUG 48851 / CIP 106301 / E264)</name>
    <dbReference type="NCBI Taxonomy" id="271848"/>
    <lineage>
        <taxon>Bacteria</taxon>
        <taxon>Pseudomonadati</taxon>
        <taxon>Pseudomonadota</taxon>
        <taxon>Betaproteobacteria</taxon>
        <taxon>Burkholderiales</taxon>
        <taxon>Burkholderiaceae</taxon>
        <taxon>Burkholderia</taxon>
        <taxon>pseudomallei group</taxon>
    </lineage>
</organism>
<sequence length="238" mass="26136">MSAGREQFVRRMRASRSAGDAFDVVLQRGTELGFQFCAYRLTAPIPITRRRTFVWSNYPNACAASPVLDADRSGRGADTDAQACGVTADATQVFESMADGLWAETSDQGVRYGWALSVRDRWGAVGTLKFARGTREIVQEELDDIEPEMIWLAHLAHDTIGSLMRDETIPGEIARVSLVERQILLWTAEGKTVSEISSILQMSVRNINFHIQNVVGKLGATNKTHAAVKATLVGLIPV</sequence>
<comment type="function">
    <text evidence="6">Represses thailandamide production.</text>
</comment>
<comment type="disruption phenotype">
    <text evidence="2 3">No production of thailandamide antibiotic. When the promoter region is disrupted (121 bases before the start codon) thailandamide production increases (PubMed:20853892). In 2 other promoter disruption mutants (617 and 624 bases before the start codon) this bacterium no longer inhibits growth of Salmonella in an overlay assay, suggesting no thailandamide is produced (PubMed:29914944).</text>
</comment>
<comment type="miscellaneous">
    <text evidence="7">Thailandamide is a polyketide that is toxic to human cell lines but also has antibacterial activity on E.coli, S.typhimurium and S.aureus. It probably acts on acetyl-CoA carboxylase in the fatty acid synthesis pathway, which is rarely found to be an antibiotic target. These data suggest it might be a good starting point for engineering of novel antibiotics.</text>
</comment>
<comment type="similarity">
    <text evidence="5">Belongs to the autoinducer-regulated transcriptional regulatory protein family.</text>
</comment>
<proteinExistence type="inferred from homology"/>
<dbReference type="EMBL" id="CP000085">
    <property type="protein sequence ID" value="ABC34138.1"/>
    <property type="molecule type" value="Genomic_DNA"/>
</dbReference>
<dbReference type="SMR" id="Q2T4M4"/>
<dbReference type="KEGG" id="bte:BTH_II1681"/>
<dbReference type="HOGENOM" id="CLU_072786_7_0_4"/>
<dbReference type="Proteomes" id="UP000001930">
    <property type="component" value="Chromosome II"/>
</dbReference>
<dbReference type="GO" id="GO:0003677">
    <property type="term" value="F:DNA binding"/>
    <property type="evidence" value="ECO:0007669"/>
    <property type="project" value="UniProtKB-KW"/>
</dbReference>
<dbReference type="GO" id="GO:0006355">
    <property type="term" value="P:regulation of DNA-templated transcription"/>
    <property type="evidence" value="ECO:0007669"/>
    <property type="project" value="InterPro"/>
</dbReference>
<dbReference type="CDD" id="cd06170">
    <property type="entry name" value="LuxR_C_like"/>
    <property type="match status" value="1"/>
</dbReference>
<dbReference type="Gene3D" id="3.30.450.80">
    <property type="entry name" value="Transcription factor LuxR-like, autoinducer-binding domain"/>
    <property type="match status" value="2"/>
</dbReference>
<dbReference type="Gene3D" id="1.10.10.10">
    <property type="entry name" value="Winged helix-like DNA-binding domain superfamily/Winged helix DNA-binding domain"/>
    <property type="match status" value="1"/>
</dbReference>
<dbReference type="InterPro" id="IPR016032">
    <property type="entry name" value="Sig_transdc_resp-reg_C-effctor"/>
</dbReference>
<dbReference type="InterPro" id="IPR005143">
    <property type="entry name" value="TF_LuxR_autoind-bd_dom"/>
</dbReference>
<dbReference type="InterPro" id="IPR036693">
    <property type="entry name" value="TF_LuxR_autoind-bd_dom_sf"/>
</dbReference>
<dbReference type="InterPro" id="IPR000792">
    <property type="entry name" value="Tscrpt_reg_LuxR_C"/>
</dbReference>
<dbReference type="InterPro" id="IPR036388">
    <property type="entry name" value="WH-like_DNA-bd_sf"/>
</dbReference>
<dbReference type="PANTHER" id="PTHR44688">
    <property type="entry name" value="DNA-BINDING TRANSCRIPTIONAL ACTIVATOR DEVR_DOSR"/>
    <property type="match status" value="1"/>
</dbReference>
<dbReference type="PANTHER" id="PTHR44688:SF16">
    <property type="entry name" value="DNA-BINDING TRANSCRIPTIONAL ACTIVATOR DEVR_DOSR"/>
    <property type="match status" value="1"/>
</dbReference>
<dbReference type="Pfam" id="PF03472">
    <property type="entry name" value="Autoind_bind"/>
    <property type="match status" value="1"/>
</dbReference>
<dbReference type="Pfam" id="PF00196">
    <property type="entry name" value="GerE"/>
    <property type="match status" value="1"/>
</dbReference>
<dbReference type="PRINTS" id="PR00038">
    <property type="entry name" value="HTHLUXR"/>
</dbReference>
<dbReference type="SMART" id="SM00421">
    <property type="entry name" value="HTH_LUXR"/>
    <property type="match status" value="1"/>
</dbReference>
<dbReference type="SUPFAM" id="SSF46894">
    <property type="entry name" value="C-terminal effector domain of the bipartite response regulators"/>
    <property type="match status" value="1"/>
</dbReference>
<dbReference type="SUPFAM" id="SSF75516">
    <property type="entry name" value="Pheromone-binding domain of LuxR-like quorum-sensing transcription factors"/>
    <property type="match status" value="1"/>
</dbReference>
<dbReference type="PROSITE" id="PS00622">
    <property type="entry name" value="HTH_LUXR_1"/>
    <property type="match status" value="1"/>
</dbReference>
<dbReference type="PROSITE" id="PS50043">
    <property type="entry name" value="HTH_LUXR_2"/>
    <property type="match status" value="1"/>
</dbReference>
<name>THAA_BURTA</name>
<protein>
    <recommendedName>
        <fullName evidence="5">Transcriptional repressor ThaA</fullName>
    </recommendedName>
</protein>
<gene>
    <name evidence="4" type="primary">thaA</name>
    <name type="ordered locus">BTH_II1681</name>
</gene>
<accession>Q2T4M4</accession>